<organism>
    <name type="scientific">Homo sapiens</name>
    <name type="common">Human</name>
    <dbReference type="NCBI Taxonomy" id="9606"/>
    <lineage>
        <taxon>Eukaryota</taxon>
        <taxon>Metazoa</taxon>
        <taxon>Chordata</taxon>
        <taxon>Craniata</taxon>
        <taxon>Vertebrata</taxon>
        <taxon>Euteleostomi</taxon>
        <taxon>Mammalia</taxon>
        <taxon>Eutheria</taxon>
        <taxon>Euarchontoglires</taxon>
        <taxon>Primates</taxon>
        <taxon>Haplorrhini</taxon>
        <taxon>Catarrhini</taxon>
        <taxon>Hominidae</taxon>
        <taxon>Homo</taxon>
    </lineage>
</organism>
<gene>
    <name type="primary">AMHR2</name>
    <name type="synonym">AMHR</name>
    <name type="synonym">MISR2</name>
</gene>
<dbReference type="EC" id="2.7.11.30"/>
<dbReference type="EMBL" id="X89013">
    <property type="protein sequence ID" value="CAA61418.1"/>
    <property type="molecule type" value="Genomic_DNA"/>
</dbReference>
<dbReference type="EMBL" id="U29700">
    <property type="protein sequence ID" value="AAC50328.1"/>
    <property type="molecule type" value="Genomic_DNA"/>
</dbReference>
<dbReference type="EMBL" id="X91156">
    <property type="protein sequence ID" value="CAA62593.1"/>
    <property type="molecule type" value="Genomic_DNA"/>
</dbReference>
<dbReference type="EMBL" id="X91157">
    <property type="protein sequence ID" value="CAA62593.1"/>
    <property type="status" value="JOINED"/>
    <property type="molecule type" value="Genomic_DNA"/>
</dbReference>
<dbReference type="EMBL" id="X91158">
    <property type="protein sequence ID" value="CAA62593.1"/>
    <property type="status" value="JOINED"/>
    <property type="molecule type" value="Genomic_DNA"/>
</dbReference>
<dbReference type="EMBL" id="X91159">
    <property type="protein sequence ID" value="CAA62593.1"/>
    <property type="status" value="JOINED"/>
    <property type="molecule type" value="Genomic_DNA"/>
</dbReference>
<dbReference type="EMBL" id="X91160">
    <property type="protein sequence ID" value="CAA62593.1"/>
    <property type="status" value="JOINED"/>
    <property type="molecule type" value="Genomic_DNA"/>
</dbReference>
<dbReference type="EMBL" id="X91161">
    <property type="protein sequence ID" value="CAA62593.1"/>
    <property type="status" value="JOINED"/>
    <property type="molecule type" value="Genomic_DNA"/>
</dbReference>
<dbReference type="EMBL" id="X91162">
    <property type="protein sequence ID" value="CAA62593.1"/>
    <property type="status" value="JOINED"/>
    <property type="molecule type" value="Genomic_DNA"/>
</dbReference>
<dbReference type="EMBL" id="X91163">
    <property type="protein sequence ID" value="CAA62593.1"/>
    <property type="status" value="JOINED"/>
    <property type="molecule type" value="Genomic_DNA"/>
</dbReference>
<dbReference type="EMBL" id="X91164">
    <property type="protein sequence ID" value="CAA62593.1"/>
    <property type="status" value="JOINED"/>
    <property type="molecule type" value="Genomic_DNA"/>
</dbReference>
<dbReference type="EMBL" id="X91165">
    <property type="protein sequence ID" value="CAA62593.1"/>
    <property type="status" value="JOINED"/>
    <property type="molecule type" value="Genomic_DNA"/>
</dbReference>
<dbReference type="EMBL" id="X91166">
    <property type="protein sequence ID" value="CAA62593.1"/>
    <property type="status" value="JOINED"/>
    <property type="molecule type" value="Genomic_DNA"/>
</dbReference>
<dbReference type="EMBL" id="AF172932">
    <property type="protein sequence ID" value="AAD48497.1"/>
    <property type="molecule type" value="mRNA"/>
</dbReference>
<dbReference type="EMBL" id="AY714878">
    <property type="protein sequence ID" value="AAU21221.1"/>
    <property type="molecule type" value="mRNA"/>
</dbReference>
<dbReference type="EMBL" id="AK313593">
    <property type="status" value="NOT_ANNOTATED_CDS"/>
    <property type="molecule type" value="mRNA"/>
</dbReference>
<dbReference type="EMBL" id="AC068889">
    <property type="status" value="NOT_ANNOTATED_CDS"/>
    <property type="molecule type" value="Genomic_DNA"/>
</dbReference>
<dbReference type="EMBL" id="BC126316">
    <property type="protein sequence ID" value="AAI26317.1"/>
    <property type="molecule type" value="mRNA"/>
</dbReference>
<dbReference type="EMBL" id="BC136356">
    <property type="protein sequence ID" value="AAI36357.1"/>
    <property type="molecule type" value="mRNA"/>
</dbReference>
<dbReference type="CCDS" id="CCDS53798.1">
    <molecule id="Q16671-3"/>
</dbReference>
<dbReference type="CCDS" id="CCDS55829.1">
    <molecule id="Q16671-2"/>
</dbReference>
<dbReference type="CCDS" id="CCDS8858.1">
    <molecule id="Q16671-1"/>
</dbReference>
<dbReference type="PIR" id="JC4335">
    <property type="entry name" value="JC4335"/>
</dbReference>
<dbReference type="RefSeq" id="NP_001158162.1">
    <molecule id="Q16671-2"/>
    <property type="nucleotide sequence ID" value="NM_001164690.2"/>
</dbReference>
<dbReference type="RefSeq" id="NP_001158163.1">
    <molecule id="Q16671-3"/>
    <property type="nucleotide sequence ID" value="NM_001164691.2"/>
</dbReference>
<dbReference type="RefSeq" id="NP_065434.1">
    <molecule id="Q16671-1"/>
    <property type="nucleotide sequence ID" value="NM_020547.3"/>
</dbReference>
<dbReference type="PDB" id="7L0J">
    <property type="method" value="X-ray"/>
    <property type="resolution" value="2.60 A"/>
    <property type="chains" value="B=18-124"/>
</dbReference>
<dbReference type="PDBsum" id="7L0J"/>
<dbReference type="SMR" id="Q16671"/>
<dbReference type="BioGRID" id="106766">
    <property type="interactions" value="59"/>
</dbReference>
<dbReference type="FunCoup" id="Q16671">
    <property type="interactions" value="435"/>
</dbReference>
<dbReference type="IntAct" id="Q16671">
    <property type="interactions" value="40"/>
</dbReference>
<dbReference type="STRING" id="9606.ENSP00000257863"/>
<dbReference type="DrugBank" id="DB00171">
    <property type="generic name" value="ATP"/>
</dbReference>
<dbReference type="GlyCosmos" id="Q16671">
    <property type="glycosylation" value="2 sites, No reported glycans"/>
</dbReference>
<dbReference type="GlyGen" id="Q16671">
    <property type="glycosylation" value="3 sites"/>
</dbReference>
<dbReference type="iPTMnet" id="Q16671"/>
<dbReference type="PhosphoSitePlus" id="Q16671"/>
<dbReference type="BioMuta" id="AMHR2"/>
<dbReference type="DMDM" id="9087133"/>
<dbReference type="MassIVE" id="Q16671"/>
<dbReference type="PaxDb" id="9606-ENSP00000257863"/>
<dbReference type="PeptideAtlas" id="Q16671"/>
<dbReference type="ProteomicsDB" id="20294"/>
<dbReference type="ProteomicsDB" id="29591"/>
<dbReference type="ProteomicsDB" id="61030">
    <molecule id="Q16671-1"/>
</dbReference>
<dbReference type="ABCD" id="Q16671">
    <property type="antibodies" value="5 sequenced antibodies"/>
</dbReference>
<dbReference type="Antibodypedia" id="27053">
    <property type="antibodies" value="335 antibodies from 33 providers"/>
</dbReference>
<dbReference type="DNASU" id="269"/>
<dbReference type="Ensembl" id="ENST00000257863.9">
    <molecule id="Q16671-1"/>
    <property type="protein sequence ID" value="ENSP00000257863.3"/>
    <property type="gene ID" value="ENSG00000135409.11"/>
</dbReference>
<dbReference type="Ensembl" id="ENST00000379791.7">
    <molecule id="Q16671-3"/>
    <property type="protein sequence ID" value="ENSP00000369117.3"/>
    <property type="gene ID" value="ENSG00000135409.11"/>
</dbReference>
<dbReference type="Ensembl" id="ENST00000550311.5">
    <molecule id="Q16671-2"/>
    <property type="protein sequence ID" value="ENSP00000446661.1"/>
    <property type="gene ID" value="ENSG00000135409.11"/>
</dbReference>
<dbReference type="GeneID" id="269"/>
<dbReference type="KEGG" id="hsa:269"/>
<dbReference type="MANE-Select" id="ENST00000257863.9">
    <property type="protein sequence ID" value="ENSP00000257863.3"/>
    <property type="RefSeq nucleotide sequence ID" value="NM_020547.3"/>
    <property type="RefSeq protein sequence ID" value="NP_065434.1"/>
</dbReference>
<dbReference type="UCSC" id="uc001scx.2">
    <molecule id="Q16671-1"/>
    <property type="organism name" value="human"/>
</dbReference>
<dbReference type="AGR" id="HGNC:465"/>
<dbReference type="CTD" id="269"/>
<dbReference type="DisGeNET" id="269"/>
<dbReference type="GeneCards" id="AMHR2"/>
<dbReference type="HGNC" id="HGNC:465">
    <property type="gene designation" value="AMHR2"/>
</dbReference>
<dbReference type="HPA" id="ENSG00000135409">
    <property type="expression patterns" value="Tissue enhanced (adrenal gland, ovary)"/>
</dbReference>
<dbReference type="MalaCards" id="AMHR2"/>
<dbReference type="MIM" id="261550">
    <property type="type" value="phenotype"/>
</dbReference>
<dbReference type="MIM" id="600956">
    <property type="type" value="gene"/>
</dbReference>
<dbReference type="neXtProt" id="NX_Q16671"/>
<dbReference type="OpenTargets" id="ENSG00000135409"/>
<dbReference type="Orphanet" id="2856">
    <property type="disease" value="Persistent Muellerian duct syndrome"/>
</dbReference>
<dbReference type="PharmGKB" id="PA24770"/>
<dbReference type="VEuPathDB" id="HostDB:ENSG00000135409"/>
<dbReference type="eggNOG" id="KOG3653">
    <property type="taxonomic scope" value="Eukaryota"/>
</dbReference>
<dbReference type="GeneTree" id="ENSGT00940000160885"/>
<dbReference type="HOGENOM" id="CLU_000288_8_4_1"/>
<dbReference type="InParanoid" id="Q16671"/>
<dbReference type="OMA" id="RCPDLWP"/>
<dbReference type="OrthoDB" id="669224at2759"/>
<dbReference type="PAN-GO" id="Q16671">
    <property type="GO annotations" value="7 GO annotations based on evolutionary models"/>
</dbReference>
<dbReference type="PhylomeDB" id="Q16671"/>
<dbReference type="TreeFam" id="TF314724"/>
<dbReference type="BRENDA" id="2.7.10.2">
    <property type="organism ID" value="2681"/>
</dbReference>
<dbReference type="PathwayCommons" id="Q16671"/>
<dbReference type="Reactome" id="R-HSA-201451">
    <property type="pathway name" value="Signaling by BMP"/>
</dbReference>
<dbReference type="SignaLink" id="Q16671"/>
<dbReference type="SIGNOR" id="Q16671"/>
<dbReference type="BioGRID-ORCS" id="269">
    <property type="hits" value="26 hits in 1183 CRISPR screens"/>
</dbReference>
<dbReference type="GenomeRNAi" id="269"/>
<dbReference type="Pharos" id="Q16671">
    <property type="development level" value="Tbio"/>
</dbReference>
<dbReference type="PRO" id="PR:Q16671"/>
<dbReference type="Proteomes" id="UP000005640">
    <property type="component" value="Chromosome 12"/>
</dbReference>
<dbReference type="RNAct" id="Q16671">
    <property type="molecule type" value="protein"/>
</dbReference>
<dbReference type="Bgee" id="ENSG00000135409">
    <property type="expression patterns" value="Expressed in right adrenal gland cortex and 102 other cell types or tissues"/>
</dbReference>
<dbReference type="ExpressionAtlas" id="Q16671">
    <property type="expression patterns" value="baseline and differential"/>
</dbReference>
<dbReference type="GO" id="GO:0005886">
    <property type="term" value="C:plasma membrane"/>
    <property type="evidence" value="ECO:0000314"/>
    <property type="project" value="UniProtKB"/>
</dbReference>
<dbReference type="GO" id="GO:0043235">
    <property type="term" value="C:receptor complex"/>
    <property type="evidence" value="ECO:0000318"/>
    <property type="project" value="GO_Central"/>
</dbReference>
<dbReference type="GO" id="GO:1990272">
    <property type="term" value="F:anti-Mullerian hormone receptor activity"/>
    <property type="evidence" value="ECO:0000314"/>
    <property type="project" value="UniProtKB"/>
</dbReference>
<dbReference type="GO" id="GO:0005524">
    <property type="term" value="F:ATP binding"/>
    <property type="evidence" value="ECO:0007669"/>
    <property type="project" value="UniProtKB-KW"/>
</dbReference>
<dbReference type="GO" id="GO:0042562">
    <property type="term" value="F:hormone binding"/>
    <property type="evidence" value="ECO:0000353"/>
    <property type="project" value="UniProtKB"/>
</dbReference>
<dbReference type="GO" id="GO:0046872">
    <property type="term" value="F:metal ion binding"/>
    <property type="evidence" value="ECO:0007669"/>
    <property type="project" value="UniProtKB-KW"/>
</dbReference>
<dbReference type="GO" id="GO:0042803">
    <property type="term" value="F:protein homodimerization activity"/>
    <property type="evidence" value="ECO:0000314"/>
    <property type="project" value="UniProtKB"/>
</dbReference>
<dbReference type="GO" id="GO:0005024">
    <property type="term" value="F:transforming growth factor beta receptor activity"/>
    <property type="evidence" value="ECO:0000318"/>
    <property type="project" value="GO_Central"/>
</dbReference>
<dbReference type="GO" id="GO:0005026">
    <property type="term" value="F:transforming growth factor beta receptor activity, type II"/>
    <property type="evidence" value="ECO:0000314"/>
    <property type="project" value="UniProtKB"/>
</dbReference>
<dbReference type="GO" id="GO:1990262">
    <property type="term" value="P:anti-Mullerian hormone receptor signaling pathway"/>
    <property type="evidence" value="ECO:0000314"/>
    <property type="project" value="UniProtKB"/>
</dbReference>
<dbReference type="GO" id="GO:0030509">
    <property type="term" value="P:BMP signaling pathway"/>
    <property type="evidence" value="ECO:0000318"/>
    <property type="project" value="GO_Central"/>
</dbReference>
<dbReference type="GO" id="GO:0071363">
    <property type="term" value="P:cellular response to growth factor stimulus"/>
    <property type="evidence" value="ECO:0000318"/>
    <property type="project" value="GO_Central"/>
</dbReference>
<dbReference type="GO" id="GO:0008585">
    <property type="term" value="P:female gonad development"/>
    <property type="evidence" value="ECO:0007669"/>
    <property type="project" value="Ensembl"/>
</dbReference>
<dbReference type="GO" id="GO:0008584">
    <property type="term" value="P:male gonad development"/>
    <property type="evidence" value="ECO:0007669"/>
    <property type="project" value="Ensembl"/>
</dbReference>
<dbReference type="GO" id="GO:0001880">
    <property type="term" value="P:Mullerian duct regression"/>
    <property type="evidence" value="ECO:0000303"/>
    <property type="project" value="UniProtKB"/>
</dbReference>
<dbReference type="GO" id="GO:0007548">
    <property type="term" value="P:sex differentiation"/>
    <property type="evidence" value="ECO:0000250"/>
    <property type="project" value="UniProtKB"/>
</dbReference>
<dbReference type="GO" id="GO:0007179">
    <property type="term" value="P:transforming growth factor beta receptor signaling pathway"/>
    <property type="evidence" value="ECO:0007669"/>
    <property type="project" value="Ensembl"/>
</dbReference>
<dbReference type="CDD" id="cd14054">
    <property type="entry name" value="STKc_BMPR2_AMHR2"/>
    <property type="match status" value="1"/>
</dbReference>
<dbReference type="CDD" id="cd23616">
    <property type="entry name" value="TFP_LU_ECD_AMHR2"/>
    <property type="match status" value="1"/>
</dbReference>
<dbReference type="FunFam" id="1.10.510.10:FF:000487">
    <property type="entry name" value="Anti-Muellerian hormone type-2 receptor"/>
    <property type="match status" value="1"/>
</dbReference>
<dbReference type="FunFam" id="2.10.60.10:FF:000012">
    <property type="entry name" value="Anti-Muellerian hormone type-2 receptor"/>
    <property type="match status" value="1"/>
</dbReference>
<dbReference type="FunFam" id="3.30.200.20:FF:000349">
    <property type="entry name" value="Anti-Muellerian hormone type-2 receptor"/>
    <property type="match status" value="1"/>
</dbReference>
<dbReference type="Gene3D" id="2.10.60.10">
    <property type="entry name" value="CD59"/>
    <property type="match status" value="1"/>
</dbReference>
<dbReference type="Gene3D" id="3.30.200.20">
    <property type="entry name" value="Phosphorylase Kinase, domain 1"/>
    <property type="match status" value="1"/>
</dbReference>
<dbReference type="Gene3D" id="1.10.510.10">
    <property type="entry name" value="Transferase(Phosphotransferase) domain 1"/>
    <property type="match status" value="1"/>
</dbReference>
<dbReference type="InterPro" id="IPR015771">
    <property type="entry name" value="Anti-muellerian_hrmn_rcpt_II"/>
</dbReference>
<dbReference type="InterPro" id="IPR011009">
    <property type="entry name" value="Kinase-like_dom_sf"/>
</dbReference>
<dbReference type="InterPro" id="IPR000719">
    <property type="entry name" value="Prot_kinase_dom"/>
</dbReference>
<dbReference type="InterPro" id="IPR045860">
    <property type="entry name" value="Snake_toxin-like_sf"/>
</dbReference>
<dbReference type="InterPro" id="IPR000333">
    <property type="entry name" value="TGFB_receptor"/>
</dbReference>
<dbReference type="PANTHER" id="PTHR23255:SF49">
    <property type="entry name" value="ANTI-MUELLERIAN HORMONE TYPE-2 RECEPTOR"/>
    <property type="match status" value="1"/>
</dbReference>
<dbReference type="PANTHER" id="PTHR23255">
    <property type="entry name" value="TRANSFORMING GROWTH FACTOR-BETA RECEPTOR TYPE I AND II"/>
    <property type="match status" value="1"/>
</dbReference>
<dbReference type="Pfam" id="PF00069">
    <property type="entry name" value="Pkinase"/>
    <property type="match status" value="1"/>
</dbReference>
<dbReference type="PIRSF" id="PIRSF037392">
    <property type="entry name" value="AMHRII"/>
    <property type="match status" value="1"/>
</dbReference>
<dbReference type="SUPFAM" id="SSF56112">
    <property type="entry name" value="Protein kinase-like (PK-like)"/>
    <property type="match status" value="1"/>
</dbReference>
<dbReference type="SUPFAM" id="SSF57302">
    <property type="entry name" value="Snake toxin-like"/>
    <property type="match status" value="1"/>
</dbReference>
<dbReference type="PROSITE" id="PS50011">
    <property type="entry name" value="PROTEIN_KINASE_DOM"/>
    <property type="match status" value="1"/>
</dbReference>
<feature type="signal peptide" evidence="3">
    <location>
        <begin position="1"/>
        <end position="17"/>
    </location>
</feature>
<feature type="chain" id="PRO_0000024408" description="Anti-Muellerian hormone type-2 receptor">
    <location>
        <begin position="18"/>
        <end position="573"/>
    </location>
</feature>
<feature type="topological domain" description="Extracellular" evidence="3">
    <location>
        <begin position="18"/>
        <end position="149"/>
    </location>
</feature>
<feature type="transmembrane region" description="Helical" evidence="3">
    <location>
        <begin position="150"/>
        <end position="170"/>
    </location>
</feature>
<feature type="topological domain" description="Cytoplasmic" evidence="3">
    <location>
        <begin position="171"/>
        <end position="573"/>
    </location>
</feature>
<feature type="domain" description="Protein kinase" evidence="4">
    <location>
        <begin position="203"/>
        <end position="518"/>
    </location>
</feature>
<feature type="active site" description="Proton acceptor" evidence="4">
    <location>
        <position position="333"/>
    </location>
</feature>
<feature type="binding site" evidence="4">
    <location>
        <begin position="209"/>
        <end position="217"/>
    </location>
    <ligand>
        <name>ATP</name>
        <dbReference type="ChEBI" id="CHEBI:30616"/>
    </ligand>
</feature>
<feature type="binding site" evidence="4">
    <location>
        <position position="230"/>
    </location>
    <ligand>
        <name>ATP</name>
        <dbReference type="ChEBI" id="CHEBI:30616"/>
    </ligand>
</feature>
<feature type="glycosylation site" description="N-linked (GlcNAc...) asparagine" evidence="3">
    <location>
        <position position="66"/>
    </location>
</feature>
<feature type="glycosylation site" description="N-linked (GlcNAc...) asparagine" evidence="3">
    <location>
        <position position="119"/>
    </location>
</feature>
<feature type="disulfide bond" evidence="2">
    <location>
        <begin position="55"/>
        <end position="79"/>
    </location>
</feature>
<feature type="disulfide bond" evidence="2">
    <location>
        <begin position="92"/>
        <end position="109"/>
    </location>
</feature>
<feature type="splice variant" id="VSP_045281" description="In isoform 3." evidence="10">
    <location>
        <begin position="381"/>
        <end position="475"/>
    </location>
</feature>
<feature type="splice variant" id="VSP_044548" description="In isoform 2." evidence="9">
    <original>DSSPPPFQLAYEAELGNTPTSDELWALAVQERRRPYIPSTWRCFATDPDGLRELLEDCWDADPEARLTAECVQQRLAALAHPQESHPFPESCPRGCPPLCPEDCTSIPAPTILPCRPQRSACHFSVQQGPCSRNPQPACTLSPV</original>
    <variation>AVHHPSNWPMRQNWAIPLPLMSYGPWQCRRGGVPTSHPPGAALPQTLMG</variation>
    <location>
        <begin position="430"/>
        <end position="573"/>
    </location>
</feature>
<feature type="sequence variant" id="VAR_015525" description="In PMDS2; dbSNP:rs534999427." evidence="7">
    <original>R</original>
    <variation>C</variation>
    <location>
        <position position="54"/>
    </location>
</feature>
<feature type="sequence variant" id="VAR_015526" description="In PMDS2; dbSNP:rs1352745784." evidence="7">
    <original>G</original>
    <variation>V</variation>
    <location>
        <position position="142"/>
    </location>
</feature>
<feature type="sequence variant" id="VAR_015527" description="In PMDS2; dbSNP:rs539695176." evidence="7">
    <original>H</original>
    <variation>Q</variation>
    <location>
        <position position="282"/>
    </location>
</feature>
<feature type="sequence variant" id="VAR_069048" description="In dbSNP:rs144236183." evidence="8">
    <original>R</original>
    <variation>H</variation>
    <location>
        <position position="319"/>
    </location>
</feature>
<feature type="sequence variant" id="VAR_015528" description="In PMDS2; dbSNP:rs137853104." evidence="5">
    <original>R</original>
    <variation>Q</variation>
    <location>
        <position position="406"/>
    </location>
</feature>
<feature type="sequence variant" id="VAR_015529" description="In PMDS2." evidence="7">
    <original>D</original>
    <variation>G</variation>
    <location>
        <position position="426"/>
    </location>
</feature>
<feature type="sequence variant" id="VAR_031057" description="In PMDS2." evidence="7">
    <location>
        <begin position="445"/>
        <end position="453"/>
    </location>
</feature>
<feature type="sequence variant" id="VAR_015530" description="In PMDS2; dbSNP:rs775889926." evidence="7">
    <original>V</original>
    <variation>A</variation>
    <location>
        <position position="458"/>
    </location>
</feature>
<feature type="sequence variant" id="VAR_015531" description="In PMDS2; dbSNP:rs780680518." evidence="7">
    <original>D</original>
    <variation>H</variation>
    <location>
        <position position="491"/>
    </location>
</feature>
<feature type="sequence variant" id="VAR_015532" description="In PMDS2; dbSNP:rs772294564." evidence="7">
    <original>R</original>
    <variation>C</variation>
    <location>
        <position position="504"/>
    </location>
</feature>
<feature type="sequence conflict" description="In Ref. 4; AAU21221." evidence="11" ref="4">
    <original>S</original>
    <variation>N</variation>
    <location>
        <position position="121"/>
    </location>
</feature>
<feature type="sequence conflict" description="In Ref. 2; CAA62593." evidence="11" ref="2">
    <original>L</original>
    <variation>V</variation>
    <location>
        <position position="161"/>
    </location>
</feature>
<feature type="sequence conflict" description="In Ref. 4; AAU21221." evidence="11" ref="4">
    <original>V</original>
    <variation>A</variation>
    <location>
        <position position="501"/>
    </location>
</feature>
<feature type="strand" evidence="12">
    <location>
        <begin position="23"/>
        <end position="28"/>
    </location>
</feature>
<feature type="helix" evidence="12">
    <location>
        <begin position="37"/>
        <end position="39"/>
    </location>
</feature>
<feature type="strand" evidence="12">
    <location>
        <begin position="40"/>
        <end position="42"/>
    </location>
</feature>
<feature type="strand" evidence="12">
    <location>
        <begin position="49"/>
        <end position="57"/>
    </location>
</feature>
<feature type="strand" evidence="12">
    <location>
        <begin position="61"/>
        <end position="67"/>
    </location>
</feature>
<feature type="strand" evidence="12">
    <location>
        <begin position="72"/>
        <end position="79"/>
    </location>
</feature>
<feature type="turn" evidence="12">
    <location>
        <begin position="85"/>
        <end position="88"/>
    </location>
</feature>
<feature type="strand" evidence="12">
    <location>
        <begin position="95"/>
        <end position="101"/>
    </location>
</feature>
<feature type="strand" evidence="12">
    <location>
        <begin position="104"/>
        <end position="111"/>
    </location>
</feature>
<feature type="turn" evidence="12">
    <location>
        <begin position="114"/>
        <end position="117"/>
    </location>
</feature>
<reference key="1">
    <citation type="journal article" date="1995" name="Nat. Genet.">
        <title>Insensitivity to anti-Muellerian hormone due to a mutation in the human anti-Muellerian hormone receptor.</title>
        <authorList>
            <person name="Imbeaud S."/>
            <person name="Faure E."/>
            <person name="Lamarre I."/>
            <person name="Mattei M.-G."/>
            <person name="di Clemente N."/>
            <person name="Tizard R."/>
            <person name="Carre-Eusebe D."/>
            <person name="Belville C."/>
            <person name="Tragethon L."/>
            <person name="Tonkin C."/>
            <person name="Nelson J."/>
            <person name="McAuliffe M."/>
            <person name="Bidart J.-M."/>
            <person name="Lababidi A."/>
            <person name="Josso N."/>
            <person name="Cate R.L."/>
            <person name="Picard J.-Y."/>
        </authorList>
    </citation>
    <scope>NUCLEOTIDE SEQUENCE [GENOMIC DNA]</scope>
</reference>
<reference key="2">
    <citation type="journal article" date="1995" name="Biochem. Biophys. Res. Commun.">
        <title>Structure and chromosomal localization of the human anti-Muellerian hormone type II receptor gene.</title>
        <authorList>
            <person name="Visser J.A."/>
            <person name="McLuskey A."/>
            <person name="van Beers T."/>
            <person name="Weghuis D.O."/>
            <person name="van Kessel A.G."/>
            <person name="Grootegoed J.A."/>
            <person name="Themmen A.P.N."/>
        </authorList>
    </citation>
    <scope>NUCLEOTIDE SEQUENCE [GENOMIC DNA]</scope>
</reference>
<reference key="3">
    <citation type="journal article" date="1999" name="Clin. Cancer Res.">
        <title>Human ovarian cancer, cell lines, and primary ascites cells express the human Muellerian inhibiting substance (MIS) type II receptor, bind, and are responsive to MIS.</title>
        <authorList>
            <person name="Masiakos P.T."/>
            <person name="MacLaughlin D.T."/>
            <person name="Maheswaran S."/>
            <person name="Teixeira J."/>
            <person name="Fuller A.F. Jr."/>
            <person name="Shah P.C."/>
            <person name="Kehas D.J."/>
            <person name="Kenneally M.K."/>
            <person name="Dombkowski D.M."/>
            <person name="Ha T.U."/>
            <person name="Preffer F.I."/>
            <person name="Donahoe P.K."/>
        </authorList>
    </citation>
    <scope>NUCLEOTIDE SEQUENCE [MRNA] (ISOFORM 1)</scope>
    <source>
        <tissue>Testis</tissue>
    </source>
</reference>
<reference key="4">
    <citation type="submission" date="2004-08" db="EMBL/GenBank/DDBJ databases">
        <authorList>
            <person name="Li H."/>
            <person name="Ke R."/>
            <person name="Shen C."/>
            <person name="Zhou G."/>
            <person name="Zhong G."/>
            <person name="Lin L."/>
            <person name="Yang S."/>
        </authorList>
    </citation>
    <scope>NUCLEOTIDE SEQUENCE [MRNA] (ISOFORM 3)</scope>
    <scope>VARIANT HIS-319</scope>
</reference>
<reference key="5">
    <citation type="journal article" date="2004" name="Nat. Genet.">
        <title>Complete sequencing and characterization of 21,243 full-length human cDNAs.</title>
        <authorList>
            <person name="Ota T."/>
            <person name="Suzuki Y."/>
            <person name="Nishikawa T."/>
            <person name="Otsuki T."/>
            <person name="Sugiyama T."/>
            <person name="Irie R."/>
            <person name="Wakamatsu A."/>
            <person name="Hayashi K."/>
            <person name="Sato H."/>
            <person name="Nagai K."/>
            <person name="Kimura K."/>
            <person name="Makita H."/>
            <person name="Sekine M."/>
            <person name="Obayashi M."/>
            <person name="Nishi T."/>
            <person name="Shibahara T."/>
            <person name="Tanaka T."/>
            <person name="Ishii S."/>
            <person name="Yamamoto J."/>
            <person name="Saito K."/>
            <person name="Kawai Y."/>
            <person name="Isono Y."/>
            <person name="Nakamura Y."/>
            <person name="Nagahari K."/>
            <person name="Murakami K."/>
            <person name="Yasuda T."/>
            <person name="Iwayanagi T."/>
            <person name="Wagatsuma M."/>
            <person name="Shiratori A."/>
            <person name="Sudo H."/>
            <person name="Hosoiri T."/>
            <person name="Kaku Y."/>
            <person name="Kodaira H."/>
            <person name="Kondo H."/>
            <person name="Sugawara M."/>
            <person name="Takahashi M."/>
            <person name="Kanda K."/>
            <person name="Yokoi T."/>
            <person name="Furuya T."/>
            <person name="Kikkawa E."/>
            <person name="Omura Y."/>
            <person name="Abe K."/>
            <person name="Kamihara K."/>
            <person name="Katsuta N."/>
            <person name="Sato K."/>
            <person name="Tanikawa M."/>
            <person name="Yamazaki M."/>
            <person name="Ninomiya K."/>
            <person name="Ishibashi T."/>
            <person name="Yamashita H."/>
            <person name="Murakawa K."/>
            <person name="Fujimori K."/>
            <person name="Tanai H."/>
            <person name="Kimata M."/>
            <person name="Watanabe M."/>
            <person name="Hiraoka S."/>
            <person name="Chiba Y."/>
            <person name="Ishida S."/>
            <person name="Ono Y."/>
            <person name="Takiguchi S."/>
            <person name="Watanabe S."/>
            <person name="Yosida M."/>
            <person name="Hotuta T."/>
            <person name="Kusano J."/>
            <person name="Kanehori K."/>
            <person name="Takahashi-Fujii A."/>
            <person name="Hara H."/>
            <person name="Tanase T.-O."/>
            <person name="Nomura Y."/>
            <person name="Togiya S."/>
            <person name="Komai F."/>
            <person name="Hara R."/>
            <person name="Takeuchi K."/>
            <person name="Arita M."/>
            <person name="Imose N."/>
            <person name="Musashino K."/>
            <person name="Yuuki H."/>
            <person name="Oshima A."/>
            <person name="Sasaki N."/>
            <person name="Aotsuka S."/>
            <person name="Yoshikawa Y."/>
            <person name="Matsunawa H."/>
            <person name="Ichihara T."/>
            <person name="Shiohata N."/>
            <person name="Sano S."/>
            <person name="Moriya S."/>
            <person name="Momiyama H."/>
            <person name="Satoh N."/>
            <person name="Takami S."/>
            <person name="Terashima Y."/>
            <person name="Suzuki O."/>
            <person name="Nakagawa S."/>
            <person name="Senoh A."/>
            <person name="Mizoguchi H."/>
            <person name="Goto Y."/>
            <person name="Shimizu F."/>
            <person name="Wakebe H."/>
            <person name="Hishigaki H."/>
            <person name="Watanabe T."/>
            <person name="Sugiyama A."/>
            <person name="Takemoto M."/>
            <person name="Kawakami B."/>
            <person name="Yamazaki M."/>
            <person name="Watanabe K."/>
            <person name="Kumagai A."/>
            <person name="Itakura S."/>
            <person name="Fukuzumi Y."/>
            <person name="Fujimori Y."/>
            <person name="Komiyama M."/>
            <person name="Tashiro H."/>
            <person name="Tanigami A."/>
            <person name="Fujiwara T."/>
            <person name="Ono T."/>
            <person name="Yamada K."/>
            <person name="Fujii Y."/>
            <person name="Ozaki K."/>
            <person name="Hirao M."/>
            <person name="Ohmori Y."/>
            <person name="Kawabata A."/>
            <person name="Hikiji T."/>
            <person name="Kobatake N."/>
            <person name="Inagaki H."/>
            <person name="Ikema Y."/>
            <person name="Okamoto S."/>
            <person name="Okitani R."/>
            <person name="Kawakami T."/>
            <person name="Noguchi S."/>
            <person name="Itoh T."/>
            <person name="Shigeta K."/>
            <person name="Senba T."/>
            <person name="Matsumura K."/>
            <person name="Nakajima Y."/>
            <person name="Mizuno T."/>
            <person name="Morinaga M."/>
            <person name="Sasaki M."/>
            <person name="Togashi T."/>
            <person name="Oyama M."/>
            <person name="Hata H."/>
            <person name="Watanabe M."/>
            <person name="Komatsu T."/>
            <person name="Mizushima-Sugano J."/>
            <person name="Satoh T."/>
            <person name="Shirai Y."/>
            <person name="Takahashi Y."/>
            <person name="Nakagawa K."/>
            <person name="Okumura K."/>
            <person name="Nagase T."/>
            <person name="Nomura N."/>
            <person name="Kikuchi H."/>
            <person name="Masuho Y."/>
            <person name="Yamashita R."/>
            <person name="Nakai K."/>
            <person name="Yada T."/>
            <person name="Nakamura Y."/>
            <person name="Ohara O."/>
            <person name="Isogai T."/>
            <person name="Sugano S."/>
        </authorList>
    </citation>
    <scope>NUCLEOTIDE SEQUENCE [LARGE SCALE MRNA] (ISOFORM 2)</scope>
    <source>
        <tissue>Testis</tissue>
    </source>
</reference>
<reference key="6">
    <citation type="journal article" date="2006" name="Nature">
        <title>The finished DNA sequence of human chromosome 12.</title>
        <authorList>
            <person name="Scherer S.E."/>
            <person name="Muzny D.M."/>
            <person name="Buhay C.J."/>
            <person name="Chen R."/>
            <person name="Cree A."/>
            <person name="Ding Y."/>
            <person name="Dugan-Rocha S."/>
            <person name="Gill R."/>
            <person name="Gunaratne P."/>
            <person name="Harris R.A."/>
            <person name="Hawes A.C."/>
            <person name="Hernandez J."/>
            <person name="Hodgson A.V."/>
            <person name="Hume J."/>
            <person name="Jackson A."/>
            <person name="Khan Z.M."/>
            <person name="Kovar-Smith C."/>
            <person name="Lewis L.R."/>
            <person name="Lozado R.J."/>
            <person name="Metzker M.L."/>
            <person name="Milosavljevic A."/>
            <person name="Miner G.R."/>
            <person name="Montgomery K.T."/>
            <person name="Morgan M.B."/>
            <person name="Nazareth L.V."/>
            <person name="Scott G."/>
            <person name="Sodergren E."/>
            <person name="Song X.-Z."/>
            <person name="Steffen D."/>
            <person name="Lovering R.C."/>
            <person name="Wheeler D.A."/>
            <person name="Worley K.C."/>
            <person name="Yuan Y."/>
            <person name="Zhang Z."/>
            <person name="Adams C.Q."/>
            <person name="Ansari-Lari M.A."/>
            <person name="Ayele M."/>
            <person name="Brown M.J."/>
            <person name="Chen G."/>
            <person name="Chen Z."/>
            <person name="Clerc-Blankenburg K.P."/>
            <person name="Davis C."/>
            <person name="Delgado O."/>
            <person name="Dinh H.H."/>
            <person name="Draper H."/>
            <person name="Gonzalez-Garay M.L."/>
            <person name="Havlak P."/>
            <person name="Jackson L.R."/>
            <person name="Jacob L.S."/>
            <person name="Kelly S.H."/>
            <person name="Li L."/>
            <person name="Li Z."/>
            <person name="Liu J."/>
            <person name="Liu W."/>
            <person name="Lu J."/>
            <person name="Maheshwari M."/>
            <person name="Nguyen B.-V."/>
            <person name="Okwuonu G.O."/>
            <person name="Pasternak S."/>
            <person name="Perez L.M."/>
            <person name="Plopper F.J.H."/>
            <person name="Santibanez J."/>
            <person name="Shen H."/>
            <person name="Tabor P.E."/>
            <person name="Verduzco D."/>
            <person name="Waldron L."/>
            <person name="Wang Q."/>
            <person name="Williams G.A."/>
            <person name="Zhang J."/>
            <person name="Zhou J."/>
            <person name="Allen C.C."/>
            <person name="Amin A.G."/>
            <person name="Anyalebechi V."/>
            <person name="Bailey M."/>
            <person name="Barbaria J.A."/>
            <person name="Bimage K.E."/>
            <person name="Bryant N.P."/>
            <person name="Burch P.E."/>
            <person name="Burkett C.E."/>
            <person name="Burrell K.L."/>
            <person name="Calderon E."/>
            <person name="Cardenas V."/>
            <person name="Carter K."/>
            <person name="Casias K."/>
            <person name="Cavazos I."/>
            <person name="Cavazos S.R."/>
            <person name="Ceasar H."/>
            <person name="Chacko J."/>
            <person name="Chan S.N."/>
            <person name="Chavez D."/>
            <person name="Christopoulos C."/>
            <person name="Chu J."/>
            <person name="Cockrell R."/>
            <person name="Cox C.D."/>
            <person name="Dang M."/>
            <person name="Dathorne S.R."/>
            <person name="David R."/>
            <person name="Davis C.M."/>
            <person name="Davy-Carroll L."/>
            <person name="Deshazo D.R."/>
            <person name="Donlin J.E."/>
            <person name="D'Souza L."/>
            <person name="Eaves K.A."/>
            <person name="Egan A."/>
            <person name="Emery-Cohen A.J."/>
            <person name="Escotto M."/>
            <person name="Flagg N."/>
            <person name="Forbes L.D."/>
            <person name="Gabisi A.M."/>
            <person name="Garza M."/>
            <person name="Hamilton C."/>
            <person name="Henderson N."/>
            <person name="Hernandez O."/>
            <person name="Hines S."/>
            <person name="Hogues M.E."/>
            <person name="Huang M."/>
            <person name="Idlebird D.G."/>
            <person name="Johnson R."/>
            <person name="Jolivet A."/>
            <person name="Jones S."/>
            <person name="Kagan R."/>
            <person name="King L.M."/>
            <person name="Leal B."/>
            <person name="Lebow H."/>
            <person name="Lee S."/>
            <person name="LeVan J.M."/>
            <person name="Lewis L.C."/>
            <person name="London P."/>
            <person name="Lorensuhewa L.M."/>
            <person name="Loulseged H."/>
            <person name="Lovett D.A."/>
            <person name="Lucier A."/>
            <person name="Lucier R.L."/>
            <person name="Ma J."/>
            <person name="Madu R.C."/>
            <person name="Mapua P."/>
            <person name="Martindale A.D."/>
            <person name="Martinez E."/>
            <person name="Massey E."/>
            <person name="Mawhiney S."/>
            <person name="Meador M.G."/>
            <person name="Mendez S."/>
            <person name="Mercado C."/>
            <person name="Mercado I.C."/>
            <person name="Merritt C.E."/>
            <person name="Miner Z.L."/>
            <person name="Minja E."/>
            <person name="Mitchell T."/>
            <person name="Mohabbat F."/>
            <person name="Mohabbat K."/>
            <person name="Montgomery B."/>
            <person name="Moore N."/>
            <person name="Morris S."/>
            <person name="Munidasa M."/>
            <person name="Ngo R.N."/>
            <person name="Nguyen N.B."/>
            <person name="Nickerson E."/>
            <person name="Nwaokelemeh O.O."/>
            <person name="Nwokenkwo S."/>
            <person name="Obregon M."/>
            <person name="Oguh M."/>
            <person name="Oragunye N."/>
            <person name="Oviedo R.J."/>
            <person name="Parish B.J."/>
            <person name="Parker D.N."/>
            <person name="Parrish J."/>
            <person name="Parks K.L."/>
            <person name="Paul H.A."/>
            <person name="Payton B.A."/>
            <person name="Perez A."/>
            <person name="Perrin W."/>
            <person name="Pickens A."/>
            <person name="Primus E.L."/>
            <person name="Pu L.-L."/>
            <person name="Puazo M."/>
            <person name="Quiles M.M."/>
            <person name="Quiroz J.B."/>
            <person name="Rabata D."/>
            <person name="Reeves K."/>
            <person name="Ruiz S.J."/>
            <person name="Shao H."/>
            <person name="Sisson I."/>
            <person name="Sonaike T."/>
            <person name="Sorelle R.P."/>
            <person name="Sutton A.E."/>
            <person name="Svatek A.F."/>
            <person name="Svetz L.A."/>
            <person name="Tamerisa K.S."/>
            <person name="Taylor T.R."/>
            <person name="Teague B."/>
            <person name="Thomas N."/>
            <person name="Thorn R.D."/>
            <person name="Trejos Z.Y."/>
            <person name="Trevino B.K."/>
            <person name="Ukegbu O.N."/>
            <person name="Urban J.B."/>
            <person name="Vasquez L.I."/>
            <person name="Vera V.A."/>
            <person name="Villasana D.M."/>
            <person name="Wang L."/>
            <person name="Ward-Moore S."/>
            <person name="Warren J.T."/>
            <person name="Wei X."/>
            <person name="White F."/>
            <person name="Williamson A.L."/>
            <person name="Wleczyk R."/>
            <person name="Wooden H.S."/>
            <person name="Wooden S.H."/>
            <person name="Yen J."/>
            <person name="Yoon L."/>
            <person name="Yoon V."/>
            <person name="Zorrilla S.E."/>
            <person name="Nelson D."/>
            <person name="Kucherlapati R."/>
            <person name="Weinstock G."/>
            <person name="Gibbs R.A."/>
        </authorList>
    </citation>
    <scope>NUCLEOTIDE SEQUENCE [LARGE SCALE GENOMIC DNA]</scope>
</reference>
<reference key="7">
    <citation type="journal article" date="2004" name="Genome Res.">
        <title>The status, quality, and expansion of the NIH full-length cDNA project: the Mammalian Gene Collection (MGC).</title>
        <authorList>
            <consortium name="The MGC Project Team"/>
        </authorList>
    </citation>
    <scope>NUCLEOTIDE SEQUENCE [LARGE SCALE MRNA] (ISOFORM 1)</scope>
    <source>
        <tissue>Testis</tissue>
    </source>
</reference>
<reference key="8">
    <citation type="journal article" date="2007" name="J. Endocrinol.">
        <title>Activin receptor-like kinase-2 inhibits activin signaling by blocking the binding of activin to its type II receptor.</title>
        <authorList>
            <person name="Renlund N."/>
            <person name="O'Neill F.H."/>
            <person name="Zhang L."/>
            <person name="Sidis Y."/>
            <person name="Teixeira J."/>
        </authorList>
    </citation>
    <scope>INTERACTION WITH ACVR1</scope>
</reference>
<reference key="9">
    <citation type="journal article" date="1996" name="Hum. Mol. Genet.">
        <title>A 27 base-pair deletion of the anti-Muellerian type II receptor gene is the most common cause of the persistent Muellerian duct syndrome.</title>
        <authorList>
            <person name="Imbeaud S."/>
            <person name="Belville C."/>
            <person name="Messika-Zeitoun L."/>
            <person name="Rey R."/>
            <person name="di Clemente N."/>
            <person name="Josso N."/>
            <person name="Picard J.-Y."/>
        </authorList>
    </citation>
    <scope>VARIANTS PMDS2 CYS-54; VAL-142; GLN-282; GLY-426; 445-GLY--LEU-453 DEL; ALA-458; HIS-491 AND CYS-504</scope>
</reference>
<reference key="10">
    <citation type="journal article" date="2001" name="J. Clin. Endocrinol. Metab.">
        <title>Autosomal recessive segregation of a truncating mutation of anti-Muellerian type II receptor in a family affected by the persistent Muellerian duct syndrome contrasts with its dominant negative activity in vitro.</title>
        <authorList>
            <person name="Messika-Zeitoun L."/>
            <person name="Gouedard L."/>
            <person name="Belville C."/>
            <person name="Dutertre M."/>
            <person name="Lins L."/>
            <person name="Imbeaud S."/>
            <person name="Hughes I.A."/>
            <person name="Picard J.-Y."/>
            <person name="Josso N."/>
            <person name="di Clemente N."/>
        </authorList>
    </citation>
    <scope>VARIANT PMDS2 GLN-406</scope>
</reference>
<accession>Q16671</accession>
<accession>A0AVE1</accession>
<accession>B9EGB7</accession>
<accession>E9PGD2</accession>
<accession>F8W1D2</accession>
<accession>Q13762</accession>
<accession>Q647K2</accession>
<evidence type="ECO:0000250" key="1"/>
<evidence type="ECO:0000250" key="2">
    <source>
        <dbReference type="UniProtKB" id="P37023"/>
    </source>
</evidence>
<evidence type="ECO:0000255" key="3"/>
<evidence type="ECO:0000255" key="4">
    <source>
        <dbReference type="PROSITE-ProRule" id="PRU00159"/>
    </source>
</evidence>
<evidence type="ECO:0000269" key="5">
    <source>
    </source>
</evidence>
<evidence type="ECO:0000269" key="6">
    <source>
    </source>
</evidence>
<evidence type="ECO:0000269" key="7">
    <source>
    </source>
</evidence>
<evidence type="ECO:0000269" key="8">
    <source ref="4"/>
</evidence>
<evidence type="ECO:0000303" key="9">
    <source>
    </source>
</evidence>
<evidence type="ECO:0000303" key="10">
    <source ref="4"/>
</evidence>
<evidence type="ECO:0000305" key="11"/>
<evidence type="ECO:0007829" key="12">
    <source>
        <dbReference type="PDB" id="7L0J"/>
    </source>
</evidence>
<protein>
    <recommendedName>
        <fullName>Anti-Muellerian hormone type-2 receptor</fullName>
        <ecNumber>2.7.11.30</ecNumber>
    </recommendedName>
    <alternativeName>
        <fullName>Anti-Muellerian hormone type II receptor</fullName>
        <shortName>AMH type II receptor</shortName>
    </alternativeName>
    <alternativeName>
        <fullName>MIS type II receptor</fullName>
        <shortName>MISRII</shortName>
        <shortName>MRII</shortName>
    </alternativeName>
</protein>
<sequence length="573" mass="62750">MLGSLGLWALLPTAVEAPPNRRTCVFFEAPGVRGSTKTLGELLDTGTELPRAIRCLYSRCCFGIWNLTQDRAQVEMQGCRDSDEPGCESLHCDPSPRAHPSPGSTLFTCSCGTDFCNANYSHLPPPGSPGTPGSQGPQAAPGESIWMALVLLGLFLLLLLLLGSIILALLQRKNYRVRGEPVPEPRPDSGRDWSVELQELPELCFSQVIREGGHAVVWAGQLQGKLVAIKAFPPRSVAQFQAERALYELPGLQHDHIVRFITASRGGPGRLLSGPLLVLELHPKGSLCHYLTQYTSDWGSSLRMALSLAQGLAFLHEERWQNGQYKPGIAHRDLSSQNVLIREDGSCAIGDLGLALVLPGLTQPPAWTPTQPQGPAAIMEAGTQRYMAPELLDKTLDLQDWGMALRRADIYSLALLLWEILSRCPDLRPDSSPPPFQLAYEAELGNTPTSDELWALAVQERRRPYIPSTWRCFATDPDGLRELLEDCWDADPEARLTAECVQQRLAALAHPQESHPFPESCPRGCPPLCPEDCTSIPAPTILPCRPQRSACHFSVQQGPCSRNPQPACTLSPV</sequence>
<proteinExistence type="evidence at protein level"/>
<keyword id="KW-0002">3D-structure</keyword>
<keyword id="KW-0025">Alternative splicing</keyword>
<keyword id="KW-0067">ATP-binding</keyword>
<keyword id="KW-0225">Disease variant</keyword>
<keyword id="KW-1015">Disulfide bond</keyword>
<keyword id="KW-0325">Glycoprotein</keyword>
<keyword id="KW-0418">Kinase</keyword>
<keyword id="KW-0460">Magnesium</keyword>
<keyword id="KW-0464">Manganese</keyword>
<keyword id="KW-0472">Membrane</keyword>
<keyword id="KW-0479">Metal-binding</keyword>
<keyword id="KW-0547">Nucleotide-binding</keyword>
<keyword id="KW-1267">Proteomics identification</keyword>
<keyword id="KW-0657">Pseudohermaphroditism</keyword>
<keyword id="KW-0675">Receptor</keyword>
<keyword id="KW-1185">Reference proteome</keyword>
<keyword id="KW-0723">Serine/threonine-protein kinase</keyword>
<keyword id="KW-0732">Signal</keyword>
<keyword id="KW-0808">Transferase</keyword>
<keyword id="KW-0812">Transmembrane</keyword>
<keyword id="KW-1133">Transmembrane helix</keyword>
<name>AMHR2_HUMAN</name>
<comment type="function">
    <text>On ligand binding, forms a receptor complex consisting of two type II and two type I transmembrane serine/threonine kinases. Type II receptors phosphorylate and activate type I receptors which autophosphorylate, then bind and activate SMAD transcriptional regulators. Receptor for anti-Muellerian hormone.</text>
</comment>
<comment type="catalytic activity">
    <reaction>
        <text>L-threonyl-[receptor-protein] + ATP = O-phospho-L-threonyl-[receptor-protein] + ADP + H(+)</text>
        <dbReference type="Rhea" id="RHEA:44880"/>
        <dbReference type="Rhea" id="RHEA-COMP:11024"/>
        <dbReference type="Rhea" id="RHEA-COMP:11025"/>
        <dbReference type="ChEBI" id="CHEBI:15378"/>
        <dbReference type="ChEBI" id="CHEBI:30013"/>
        <dbReference type="ChEBI" id="CHEBI:30616"/>
        <dbReference type="ChEBI" id="CHEBI:61977"/>
        <dbReference type="ChEBI" id="CHEBI:456216"/>
        <dbReference type="EC" id="2.7.11.30"/>
    </reaction>
</comment>
<comment type="catalytic activity">
    <reaction>
        <text>L-seryl-[receptor-protein] + ATP = O-phospho-L-seryl-[receptor-protein] + ADP + H(+)</text>
        <dbReference type="Rhea" id="RHEA:18673"/>
        <dbReference type="Rhea" id="RHEA-COMP:11022"/>
        <dbReference type="Rhea" id="RHEA-COMP:11023"/>
        <dbReference type="ChEBI" id="CHEBI:15378"/>
        <dbReference type="ChEBI" id="CHEBI:29999"/>
        <dbReference type="ChEBI" id="CHEBI:30616"/>
        <dbReference type="ChEBI" id="CHEBI:83421"/>
        <dbReference type="ChEBI" id="CHEBI:456216"/>
        <dbReference type="EC" id="2.7.11.30"/>
    </reaction>
</comment>
<comment type="cofactor">
    <cofactor evidence="1">
        <name>Mg(2+)</name>
        <dbReference type="ChEBI" id="CHEBI:18420"/>
    </cofactor>
    <cofactor evidence="1">
        <name>Mn(2+)</name>
        <dbReference type="ChEBI" id="CHEBI:29035"/>
    </cofactor>
</comment>
<comment type="subunit">
    <text evidence="6">Interacts with type I receptor ACVR1.</text>
</comment>
<comment type="interaction">
    <interactant intactId="EBI-6423788">
        <id>Q16671</id>
    </interactant>
    <interactant intactId="EBI-295634">
        <id>Q16543</id>
        <label>CDC37</label>
    </interactant>
    <organismsDiffer>false</organismsDiffer>
    <experiments>2</experiments>
</comment>
<comment type="interaction">
    <interactant intactId="EBI-6423788">
        <id>Q16671</id>
    </interactant>
    <interactant intactId="EBI-296047">
        <id>P07900</id>
        <label>HSP90AA1</label>
    </interactant>
    <organismsDiffer>false</organismsDiffer>
    <experiments>3</experiments>
</comment>
<comment type="interaction">
    <interactant intactId="EBI-6423788">
        <id>Q16671</id>
    </interactant>
    <interactant intactId="EBI-352572">
        <id>P08238</id>
        <label>HSP90AB1</label>
    </interactant>
    <organismsDiffer>false</organismsDiffer>
    <experiments>4</experiments>
</comment>
<comment type="interaction">
    <interactant intactId="EBI-6423788">
        <id>Q16671</id>
    </interactant>
    <interactant intactId="EBI-3932027">
        <id>P21145</id>
        <label>MAL</label>
    </interactant>
    <organismsDiffer>false</organismsDiffer>
    <experiments>3</experiments>
</comment>
<comment type="subcellular location">
    <subcellularLocation>
        <location>Membrane</location>
        <topology>Single-pass type I membrane protein</topology>
    </subcellularLocation>
</comment>
<comment type="alternative products">
    <event type="alternative splicing"/>
    <isoform>
        <id>Q16671-1</id>
        <name>1</name>
        <sequence type="displayed"/>
    </isoform>
    <isoform>
        <id>Q16671-2</id>
        <name>2</name>
        <sequence type="described" ref="VSP_044548"/>
    </isoform>
    <isoform>
        <id>Q16671-3</id>
        <name>3</name>
        <sequence type="described" ref="VSP_045281"/>
    </isoform>
</comment>
<comment type="disease" evidence="5 7">
    <disease id="DI-02156">
        <name>Persistent Muellerian duct syndrome 2</name>
        <acronym>PMDS2</acronym>
        <description>A form of male pseudohermaphroditism characterized by a failure of Muellerian duct regression in otherwise normal males.</description>
        <dbReference type="MIM" id="261550"/>
    </disease>
    <text>The disease is caused by variants affecting the gene represented in this entry.</text>
</comment>
<comment type="similarity">
    <text evidence="11">Belongs to the protein kinase superfamily. TKL Ser/Thr protein kinase family. TGFB receptor subfamily.</text>
</comment>
<comment type="online information" name="Wikipedia">
    <link uri="https://en.wikipedia.org/wiki/Anti-m%C3%BCllerian_hormone"/>
    <text>Anti-Mullerian hormone entry</text>
</comment>